<comment type="function">
    <text evidence="1 3">Involved in the early steps of selenocysteine biosynthesis and tRNA(Sec) charging to the later steps resulting in the cotranslational incorporation of selenocysteine into selenoproteins. Stabilizes the SECISBP2, EEFSEC and tRNA(Sec) complex. May be involved in the methylation of tRNA(Sec). Enhances efficiency of selenoproteins synthesis (By similarity).</text>
</comment>
<comment type="subunit">
    <text evidence="1 3">Component of the tRNA(Sec) complex composed at least of EEFSEC, SECISBP2, SEPHS1, SEPSECS, TRNAU1AP and tRNA(Sec). Found in a complex with tRNA(Sec). Interacts with SEPSECS. Associates with mRNP and/or polysomes (By similarity). Found in a complex with EEFSEC, SECISBP2, TRNAU1AP and tRNA(Sec).</text>
</comment>
<comment type="interaction">
    <interactant intactId="EBI-12581310">
        <id>Q9NX07</id>
    </interactant>
    <interactant intactId="EBI-1049597">
        <id>P27797</id>
        <label>CALR</label>
    </interactant>
    <organismsDiffer>false</organismsDiffer>
    <experiments>3</experiments>
</comment>
<comment type="interaction">
    <interactant intactId="EBI-12581310">
        <id>Q9NX07</id>
    </interactant>
    <interactant intactId="EBI-351007">
        <id>P36957</id>
        <label>DLST</label>
    </interactant>
    <organismsDiffer>false</organismsDiffer>
    <experiments>3</experiments>
</comment>
<comment type="interaction">
    <interactant intactId="EBI-12581310">
        <id>Q9NX07</id>
    </interactant>
    <interactant intactId="EBI-2432309">
        <id>Q92876</id>
        <label>KLK6</label>
    </interactant>
    <organismsDiffer>false</organismsDiffer>
    <experiments>3</experiments>
</comment>
<comment type="interaction">
    <interactant intactId="EBI-12581310">
        <id>Q9NX07</id>
    </interactant>
    <interactant intactId="EBI-1055945">
        <id>Q8TDX7</id>
        <label>NEK7</label>
    </interactant>
    <organismsDiffer>false</organismsDiffer>
    <experiments>3</experiments>
</comment>
<comment type="interaction">
    <interactant intactId="EBI-21894090">
        <id>Q9NX07-2</id>
    </interactant>
    <interactant intactId="EBI-10968534">
        <id>P50570-2</id>
        <label>DNM2</label>
    </interactant>
    <organismsDiffer>false</organismsDiffer>
    <experiments>3</experiments>
</comment>
<comment type="interaction">
    <interactant intactId="EBI-21894090">
        <id>Q9NX07-2</id>
    </interactant>
    <interactant intactId="EBI-395421">
        <id>Q16637</id>
        <label>SMN2</label>
    </interactant>
    <organismsDiffer>false</organismsDiffer>
    <experiments>3</experiments>
</comment>
<comment type="interaction">
    <interactant intactId="EBI-21894090">
        <id>Q9NX07-2</id>
    </interactant>
    <interactant intactId="EBI-25847109">
        <id>O14656-2</id>
        <label>TOR1A</label>
    </interactant>
    <organismsDiffer>false</organismsDiffer>
    <experiments>3</experiments>
</comment>
<comment type="subcellular location">
    <subcellularLocation>
        <location evidence="1">Nucleus</location>
    </subcellularLocation>
    <subcellularLocation>
        <location evidence="1">Cytoplasm</location>
    </subcellularLocation>
    <text evidence="1">Abundant in the nucleus.</text>
</comment>
<comment type="alternative products">
    <event type="alternative splicing"/>
    <isoform>
        <id>Q9NX07-1</id>
        <name>1</name>
        <sequence type="displayed"/>
    </isoform>
    <isoform>
        <id>Q9NX07-2</id>
        <name>2</name>
        <sequence type="described" ref="VSP_028130"/>
    </isoform>
</comment>
<comment type="similarity">
    <text evidence="5">Belongs to the RRM TRSPAP family.</text>
</comment>
<protein>
    <recommendedName>
        <fullName>tRNA selenocysteine 1-associated protein 1</fullName>
    </recommendedName>
    <alternativeName>
        <fullName>SECp43</fullName>
    </alternativeName>
    <alternativeName>
        <fullName>tRNA selenocysteine-associated protein 1</fullName>
    </alternativeName>
</protein>
<gene>
    <name type="primary">TRNAU1AP</name>
    <name type="synonym">SECP43</name>
    <name type="synonym">TRSPAP1</name>
</gene>
<name>TSAP1_HUMAN</name>
<keyword id="KW-0002">3D-structure</keyword>
<keyword id="KW-0025">Alternative splicing</keyword>
<keyword id="KW-0963">Cytoplasm</keyword>
<keyword id="KW-0539">Nucleus</keyword>
<keyword id="KW-0648">Protein biosynthesis</keyword>
<keyword id="KW-1267">Proteomics identification</keyword>
<keyword id="KW-1185">Reference proteome</keyword>
<keyword id="KW-0677">Repeat</keyword>
<keyword id="KW-0694">RNA-binding</keyword>
<accession>Q9NX07</accession>
<accession>Q86SU7</accession>
<sequence>MAASLWMGDLEPYMDENFISRAFATMGETVMSVKIIRNRLTGIPAGYCFVEFADLATAEKCLHKINGKPLPGATPAKRFKLNYATYGKQPDNSPEYSLFVGDLTPDVDDGMLYEFFVKVYPSCRGGKVVLDQTGVSKGYGFVKFTDELEQKRALTECQGAVGLGSKPVRLSVAIPKASRVKPVEYSQMYSYSYNQYYQQYQNYYAQWGYDQNTGSYSYSYPQYGYTQSTMQTYEEVGDDALEDPMPQLDVTEANKEFMEQSEELYDALMDCHWQPLDTVSSEIPAMM</sequence>
<reference key="1">
    <citation type="journal article" date="2004" name="Nat. Genet.">
        <title>Complete sequencing and characterization of 21,243 full-length human cDNAs.</title>
        <authorList>
            <person name="Ota T."/>
            <person name="Suzuki Y."/>
            <person name="Nishikawa T."/>
            <person name="Otsuki T."/>
            <person name="Sugiyama T."/>
            <person name="Irie R."/>
            <person name="Wakamatsu A."/>
            <person name="Hayashi K."/>
            <person name="Sato H."/>
            <person name="Nagai K."/>
            <person name="Kimura K."/>
            <person name="Makita H."/>
            <person name="Sekine M."/>
            <person name="Obayashi M."/>
            <person name="Nishi T."/>
            <person name="Shibahara T."/>
            <person name="Tanaka T."/>
            <person name="Ishii S."/>
            <person name="Yamamoto J."/>
            <person name="Saito K."/>
            <person name="Kawai Y."/>
            <person name="Isono Y."/>
            <person name="Nakamura Y."/>
            <person name="Nagahari K."/>
            <person name="Murakami K."/>
            <person name="Yasuda T."/>
            <person name="Iwayanagi T."/>
            <person name="Wagatsuma M."/>
            <person name="Shiratori A."/>
            <person name="Sudo H."/>
            <person name="Hosoiri T."/>
            <person name="Kaku Y."/>
            <person name="Kodaira H."/>
            <person name="Kondo H."/>
            <person name="Sugawara M."/>
            <person name="Takahashi M."/>
            <person name="Kanda K."/>
            <person name="Yokoi T."/>
            <person name="Furuya T."/>
            <person name="Kikkawa E."/>
            <person name="Omura Y."/>
            <person name="Abe K."/>
            <person name="Kamihara K."/>
            <person name="Katsuta N."/>
            <person name="Sato K."/>
            <person name="Tanikawa M."/>
            <person name="Yamazaki M."/>
            <person name="Ninomiya K."/>
            <person name="Ishibashi T."/>
            <person name="Yamashita H."/>
            <person name="Murakawa K."/>
            <person name="Fujimori K."/>
            <person name="Tanai H."/>
            <person name="Kimata M."/>
            <person name="Watanabe M."/>
            <person name="Hiraoka S."/>
            <person name="Chiba Y."/>
            <person name="Ishida S."/>
            <person name="Ono Y."/>
            <person name="Takiguchi S."/>
            <person name="Watanabe S."/>
            <person name="Yosida M."/>
            <person name="Hotuta T."/>
            <person name="Kusano J."/>
            <person name="Kanehori K."/>
            <person name="Takahashi-Fujii A."/>
            <person name="Hara H."/>
            <person name="Tanase T.-O."/>
            <person name="Nomura Y."/>
            <person name="Togiya S."/>
            <person name="Komai F."/>
            <person name="Hara R."/>
            <person name="Takeuchi K."/>
            <person name="Arita M."/>
            <person name="Imose N."/>
            <person name="Musashino K."/>
            <person name="Yuuki H."/>
            <person name="Oshima A."/>
            <person name="Sasaki N."/>
            <person name="Aotsuka S."/>
            <person name="Yoshikawa Y."/>
            <person name="Matsunawa H."/>
            <person name="Ichihara T."/>
            <person name="Shiohata N."/>
            <person name="Sano S."/>
            <person name="Moriya S."/>
            <person name="Momiyama H."/>
            <person name="Satoh N."/>
            <person name="Takami S."/>
            <person name="Terashima Y."/>
            <person name="Suzuki O."/>
            <person name="Nakagawa S."/>
            <person name="Senoh A."/>
            <person name="Mizoguchi H."/>
            <person name="Goto Y."/>
            <person name="Shimizu F."/>
            <person name="Wakebe H."/>
            <person name="Hishigaki H."/>
            <person name="Watanabe T."/>
            <person name="Sugiyama A."/>
            <person name="Takemoto M."/>
            <person name="Kawakami B."/>
            <person name="Yamazaki M."/>
            <person name="Watanabe K."/>
            <person name="Kumagai A."/>
            <person name="Itakura S."/>
            <person name="Fukuzumi Y."/>
            <person name="Fujimori Y."/>
            <person name="Komiyama M."/>
            <person name="Tashiro H."/>
            <person name="Tanigami A."/>
            <person name="Fujiwara T."/>
            <person name="Ono T."/>
            <person name="Yamada K."/>
            <person name="Fujii Y."/>
            <person name="Ozaki K."/>
            <person name="Hirao M."/>
            <person name="Ohmori Y."/>
            <person name="Kawabata A."/>
            <person name="Hikiji T."/>
            <person name="Kobatake N."/>
            <person name="Inagaki H."/>
            <person name="Ikema Y."/>
            <person name="Okamoto S."/>
            <person name="Okitani R."/>
            <person name="Kawakami T."/>
            <person name="Noguchi S."/>
            <person name="Itoh T."/>
            <person name="Shigeta K."/>
            <person name="Senba T."/>
            <person name="Matsumura K."/>
            <person name="Nakajima Y."/>
            <person name="Mizuno T."/>
            <person name="Morinaga M."/>
            <person name="Sasaki M."/>
            <person name="Togashi T."/>
            <person name="Oyama M."/>
            <person name="Hata H."/>
            <person name="Watanabe M."/>
            <person name="Komatsu T."/>
            <person name="Mizushima-Sugano J."/>
            <person name="Satoh T."/>
            <person name="Shirai Y."/>
            <person name="Takahashi Y."/>
            <person name="Nakagawa K."/>
            <person name="Okumura K."/>
            <person name="Nagase T."/>
            <person name="Nomura N."/>
            <person name="Kikuchi H."/>
            <person name="Masuho Y."/>
            <person name="Yamashita R."/>
            <person name="Nakai K."/>
            <person name="Yada T."/>
            <person name="Nakamura Y."/>
            <person name="Ohara O."/>
            <person name="Isogai T."/>
            <person name="Sugano S."/>
        </authorList>
    </citation>
    <scope>NUCLEOTIDE SEQUENCE [LARGE SCALE MRNA] (ISOFORM 1)</scope>
</reference>
<reference key="2">
    <citation type="journal article" date="2006" name="Nature">
        <title>The DNA sequence and biological annotation of human chromosome 1.</title>
        <authorList>
            <person name="Gregory S.G."/>
            <person name="Barlow K.F."/>
            <person name="McLay K.E."/>
            <person name="Kaul R."/>
            <person name="Swarbreck D."/>
            <person name="Dunham A."/>
            <person name="Scott C.E."/>
            <person name="Howe K.L."/>
            <person name="Woodfine K."/>
            <person name="Spencer C.C.A."/>
            <person name="Jones M.C."/>
            <person name="Gillson C."/>
            <person name="Searle S."/>
            <person name="Zhou Y."/>
            <person name="Kokocinski F."/>
            <person name="McDonald L."/>
            <person name="Evans R."/>
            <person name="Phillips K."/>
            <person name="Atkinson A."/>
            <person name="Cooper R."/>
            <person name="Jones C."/>
            <person name="Hall R.E."/>
            <person name="Andrews T.D."/>
            <person name="Lloyd C."/>
            <person name="Ainscough R."/>
            <person name="Almeida J.P."/>
            <person name="Ambrose K.D."/>
            <person name="Anderson F."/>
            <person name="Andrew R.W."/>
            <person name="Ashwell R.I.S."/>
            <person name="Aubin K."/>
            <person name="Babbage A.K."/>
            <person name="Bagguley C.L."/>
            <person name="Bailey J."/>
            <person name="Beasley H."/>
            <person name="Bethel G."/>
            <person name="Bird C.P."/>
            <person name="Bray-Allen S."/>
            <person name="Brown J.Y."/>
            <person name="Brown A.J."/>
            <person name="Buckley D."/>
            <person name="Burton J."/>
            <person name="Bye J."/>
            <person name="Carder C."/>
            <person name="Chapman J.C."/>
            <person name="Clark S.Y."/>
            <person name="Clarke G."/>
            <person name="Clee C."/>
            <person name="Cobley V."/>
            <person name="Collier R.E."/>
            <person name="Corby N."/>
            <person name="Coville G.J."/>
            <person name="Davies J."/>
            <person name="Deadman R."/>
            <person name="Dunn M."/>
            <person name="Earthrowl M."/>
            <person name="Ellington A.G."/>
            <person name="Errington H."/>
            <person name="Frankish A."/>
            <person name="Frankland J."/>
            <person name="French L."/>
            <person name="Garner P."/>
            <person name="Garnett J."/>
            <person name="Gay L."/>
            <person name="Ghori M.R.J."/>
            <person name="Gibson R."/>
            <person name="Gilby L.M."/>
            <person name="Gillett W."/>
            <person name="Glithero R.J."/>
            <person name="Grafham D.V."/>
            <person name="Griffiths C."/>
            <person name="Griffiths-Jones S."/>
            <person name="Grocock R."/>
            <person name="Hammond S."/>
            <person name="Harrison E.S.I."/>
            <person name="Hart E."/>
            <person name="Haugen E."/>
            <person name="Heath P.D."/>
            <person name="Holmes S."/>
            <person name="Holt K."/>
            <person name="Howden P.J."/>
            <person name="Hunt A.R."/>
            <person name="Hunt S.E."/>
            <person name="Hunter G."/>
            <person name="Isherwood J."/>
            <person name="James R."/>
            <person name="Johnson C."/>
            <person name="Johnson D."/>
            <person name="Joy A."/>
            <person name="Kay M."/>
            <person name="Kershaw J.K."/>
            <person name="Kibukawa M."/>
            <person name="Kimberley A.M."/>
            <person name="King A."/>
            <person name="Knights A.J."/>
            <person name="Lad H."/>
            <person name="Laird G."/>
            <person name="Lawlor S."/>
            <person name="Leongamornlert D.A."/>
            <person name="Lloyd D.M."/>
            <person name="Loveland J."/>
            <person name="Lovell J."/>
            <person name="Lush M.J."/>
            <person name="Lyne R."/>
            <person name="Martin S."/>
            <person name="Mashreghi-Mohammadi M."/>
            <person name="Matthews L."/>
            <person name="Matthews N.S.W."/>
            <person name="McLaren S."/>
            <person name="Milne S."/>
            <person name="Mistry S."/>
            <person name="Moore M.J.F."/>
            <person name="Nickerson T."/>
            <person name="O'Dell C.N."/>
            <person name="Oliver K."/>
            <person name="Palmeiri A."/>
            <person name="Palmer S.A."/>
            <person name="Parker A."/>
            <person name="Patel D."/>
            <person name="Pearce A.V."/>
            <person name="Peck A.I."/>
            <person name="Pelan S."/>
            <person name="Phelps K."/>
            <person name="Phillimore B.J."/>
            <person name="Plumb R."/>
            <person name="Rajan J."/>
            <person name="Raymond C."/>
            <person name="Rouse G."/>
            <person name="Saenphimmachak C."/>
            <person name="Sehra H.K."/>
            <person name="Sheridan E."/>
            <person name="Shownkeen R."/>
            <person name="Sims S."/>
            <person name="Skuce C.D."/>
            <person name="Smith M."/>
            <person name="Steward C."/>
            <person name="Subramanian S."/>
            <person name="Sycamore N."/>
            <person name="Tracey A."/>
            <person name="Tromans A."/>
            <person name="Van Helmond Z."/>
            <person name="Wall M."/>
            <person name="Wallis J.M."/>
            <person name="White S."/>
            <person name="Whitehead S.L."/>
            <person name="Wilkinson J.E."/>
            <person name="Willey D.L."/>
            <person name="Williams H."/>
            <person name="Wilming L."/>
            <person name="Wray P.W."/>
            <person name="Wu Z."/>
            <person name="Coulson A."/>
            <person name="Vaudin M."/>
            <person name="Sulston J.E."/>
            <person name="Durbin R.M."/>
            <person name="Hubbard T."/>
            <person name="Wooster R."/>
            <person name="Dunham I."/>
            <person name="Carter N.P."/>
            <person name="McVean G."/>
            <person name="Ross M.T."/>
            <person name="Harrow J."/>
            <person name="Olson M.V."/>
            <person name="Beck S."/>
            <person name="Rogers J."/>
            <person name="Bentley D.R."/>
        </authorList>
    </citation>
    <scope>NUCLEOTIDE SEQUENCE [LARGE SCALE GENOMIC DNA]</scope>
</reference>
<reference key="3">
    <citation type="submission" date="2005-07" db="EMBL/GenBank/DDBJ databases">
        <authorList>
            <person name="Mural R.J."/>
            <person name="Istrail S."/>
            <person name="Sutton G.G."/>
            <person name="Florea L."/>
            <person name="Halpern A.L."/>
            <person name="Mobarry C.M."/>
            <person name="Lippert R."/>
            <person name="Walenz B."/>
            <person name="Shatkay H."/>
            <person name="Dew I."/>
            <person name="Miller J.R."/>
            <person name="Flanigan M.J."/>
            <person name="Edwards N.J."/>
            <person name="Bolanos R."/>
            <person name="Fasulo D."/>
            <person name="Halldorsson B.V."/>
            <person name="Hannenhalli S."/>
            <person name="Turner R."/>
            <person name="Yooseph S."/>
            <person name="Lu F."/>
            <person name="Nusskern D.R."/>
            <person name="Shue B.C."/>
            <person name="Zheng X.H."/>
            <person name="Zhong F."/>
            <person name="Delcher A.L."/>
            <person name="Huson D.H."/>
            <person name="Kravitz S.A."/>
            <person name="Mouchard L."/>
            <person name="Reinert K."/>
            <person name="Remington K.A."/>
            <person name="Clark A.G."/>
            <person name="Waterman M.S."/>
            <person name="Eichler E.E."/>
            <person name="Adams M.D."/>
            <person name="Hunkapiller M.W."/>
            <person name="Myers E.W."/>
            <person name="Venter J.C."/>
        </authorList>
    </citation>
    <scope>NUCLEOTIDE SEQUENCE [LARGE SCALE GENOMIC DNA]</scope>
</reference>
<reference key="4">
    <citation type="journal article" date="2004" name="Genome Res.">
        <title>The status, quality, and expansion of the NIH full-length cDNA project: the Mammalian Gene Collection (MGC).</title>
        <authorList>
            <consortium name="The MGC Project Team"/>
        </authorList>
    </citation>
    <scope>NUCLEOTIDE SEQUENCE [LARGE SCALE MRNA] (ISOFORMS 1 AND 2)</scope>
    <source>
        <tissue>Brain</tissue>
        <tissue>Colon</tissue>
    </source>
</reference>
<reference key="5">
    <citation type="journal article" date="2006" name="Mol. Cell. Biol.">
        <title>Supramolecular complexes mediate selenocysteine incorporation in vivo.</title>
        <authorList>
            <person name="Small-Howard A."/>
            <person name="Morozova N."/>
            <person name="Stoytcheva Z."/>
            <person name="Forry E.P."/>
            <person name="Mansell J.B."/>
            <person name="Harney J.W."/>
            <person name="Carlson B.A."/>
            <person name="Xu X.M."/>
            <person name="Hatfield D.L."/>
            <person name="Berry M.J."/>
        </authorList>
    </citation>
    <scope>FUNCTION</scope>
    <scope>IDENTIFICATION IN A COMPLEX WITH EEFSEC; SECISBP2 AND TRNA(SEC)</scope>
</reference>
<reference key="6">
    <citation type="submission" date="2006-09" db="PDB data bank">
        <title>Solution structure of the RRM domain and of the C-terminal RNA recognition motif of tRNA selenocysteine associated protein.</title>
        <authorList>
            <consortium name="RIKEN structural genomics initiative (RSGI)"/>
        </authorList>
    </citation>
    <scope>STRUCTURE BY NMR OF 1-184</scope>
</reference>
<evidence type="ECO:0000250" key="1"/>
<evidence type="ECO:0000255" key="2">
    <source>
        <dbReference type="PROSITE-ProRule" id="PRU00176"/>
    </source>
</evidence>
<evidence type="ECO:0000269" key="3">
    <source>
    </source>
</evidence>
<evidence type="ECO:0000303" key="4">
    <source>
    </source>
</evidence>
<evidence type="ECO:0000305" key="5"/>
<evidence type="ECO:0007829" key="6">
    <source>
        <dbReference type="PDB" id="2DHG"/>
    </source>
</evidence>
<evidence type="ECO:0007829" key="7">
    <source>
        <dbReference type="PDB" id="2DIV"/>
    </source>
</evidence>
<dbReference type="EMBL" id="AK000510">
    <property type="protein sequence ID" value="BAA91217.1"/>
    <property type="molecule type" value="mRNA"/>
</dbReference>
<dbReference type="EMBL" id="AL513497">
    <property type="status" value="NOT_ANNOTATED_CDS"/>
    <property type="molecule type" value="Genomic_DNA"/>
</dbReference>
<dbReference type="EMBL" id="CH471059">
    <property type="protein sequence ID" value="EAX07689.1"/>
    <property type="molecule type" value="Genomic_DNA"/>
</dbReference>
<dbReference type="EMBL" id="BC000680">
    <property type="protein sequence ID" value="AAH00680.1"/>
    <property type="molecule type" value="mRNA"/>
</dbReference>
<dbReference type="EMBL" id="BC039879">
    <property type="protein sequence ID" value="AAH39879.1"/>
    <property type="molecule type" value="mRNA"/>
</dbReference>
<dbReference type="CCDS" id="CCDS324.1">
    <molecule id="Q9NX07-1"/>
</dbReference>
<dbReference type="RefSeq" id="NP_060316.1">
    <molecule id="Q9NX07-1"/>
    <property type="nucleotide sequence ID" value="NM_017846.5"/>
</dbReference>
<dbReference type="RefSeq" id="XP_016857031.1">
    <property type="nucleotide sequence ID" value="XM_017001542.1"/>
</dbReference>
<dbReference type="PDB" id="2DHG">
    <property type="method" value="NMR"/>
    <property type="chains" value="A=94-184"/>
</dbReference>
<dbReference type="PDB" id="2DIV">
    <property type="method" value="NMR"/>
    <property type="chains" value="A=1-86"/>
</dbReference>
<dbReference type="PDBsum" id="2DHG"/>
<dbReference type="PDBsum" id="2DIV"/>
<dbReference type="SMR" id="Q9NX07"/>
<dbReference type="BioGRID" id="120290">
    <property type="interactions" value="45"/>
</dbReference>
<dbReference type="CORUM" id="Q9NX07"/>
<dbReference type="FunCoup" id="Q9NX07">
    <property type="interactions" value="3124"/>
</dbReference>
<dbReference type="IntAct" id="Q9NX07">
    <property type="interactions" value="22"/>
</dbReference>
<dbReference type="MINT" id="Q9NX07"/>
<dbReference type="STRING" id="9606.ENSP00000362936"/>
<dbReference type="GlyGen" id="Q9NX07">
    <property type="glycosylation" value="1 site"/>
</dbReference>
<dbReference type="iPTMnet" id="Q9NX07"/>
<dbReference type="PhosphoSitePlus" id="Q9NX07"/>
<dbReference type="BioMuta" id="TRNAU1AP"/>
<dbReference type="DMDM" id="74761781"/>
<dbReference type="jPOST" id="Q9NX07"/>
<dbReference type="MassIVE" id="Q9NX07"/>
<dbReference type="PaxDb" id="9606-ENSP00000362936"/>
<dbReference type="PeptideAtlas" id="Q9NX07"/>
<dbReference type="ProteomicsDB" id="83017">
    <molecule id="Q9NX07-1"/>
</dbReference>
<dbReference type="ProteomicsDB" id="83018">
    <molecule id="Q9NX07-2"/>
</dbReference>
<dbReference type="Pumba" id="Q9NX07"/>
<dbReference type="Antibodypedia" id="30961">
    <property type="antibodies" value="146 antibodies from 24 providers"/>
</dbReference>
<dbReference type="DNASU" id="54952"/>
<dbReference type="Ensembl" id="ENST00000373830.4">
    <molecule id="Q9NX07-1"/>
    <property type="protein sequence ID" value="ENSP00000362936.3"/>
    <property type="gene ID" value="ENSG00000180098.9"/>
</dbReference>
<dbReference type="GeneID" id="54952"/>
<dbReference type="KEGG" id="hsa:54952"/>
<dbReference type="MANE-Select" id="ENST00000373830.4">
    <property type="protein sequence ID" value="ENSP00000362936.3"/>
    <property type="RefSeq nucleotide sequence ID" value="NM_017846.5"/>
    <property type="RefSeq protein sequence ID" value="NP_060316.1"/>
</dbReference>
<dbReference type="UCSC" id="uc001bqi.4">
    <molecule id="Q9NX07-1"/>
    <property type="organism name" value="human"/>
</dbReference>
<dbReference type="AGR" id="HGNC:30813"/>
<dbReference type="CTD" id="54952"/>
<dbReference type="GeneCards" id="TRNAU1AP"/>
<dbReference type="HGNC" id="HGNC:30813">
    <property type="gene designation" value="TRNAU1AP"/>
</dbReference>
<dbReference type="HPA" id="ENSG00000180098">
    <property type="expression patterns" value="Low tissue specificity"/>
</dbReference>
<dbReference type="MIM" id="619597">
    <property type="type" value="gene"/>
</dbReference>
<dbReference type="neXtProt" id="NX_Q9NX07"/>
<dbReference type="OpenTargets" id="ENSG00000180098"/>
<dbReference type="PharmGKB" id="PA164727240"/>
<dbReference type="VEuPathDB" id="HostDB:ENSG00000180098"/>
<dbReference type="eggNOG" id="KOG0118">
    <property type="taxonomic scope" value="Eukaryota"/>
</dbReference>
<dbReference type="GeneTree" id="ENSGT00940000156139"/>
<dbReference type="HOGENOM" id="CLU_016304_3_0_1"/>
<dbReference type="InParanoid" id="Q9NX07"/>
<dbReference type="OMA" id="YDMNGYV"/>
<dbReference type="OrthoDB" id="446113at2759"/>
<dbReference type="PAN-GO" id="Q9NX07">
    <property type="GO annotations" value="3 GO annotations based on evolutionary models"/>
</dbReference>
<dbReference type="PhylomeDB" id="Q9NX07"/>
<dbReference type="TreeFam" id="TF313275"/>
<dbReference type="PathwayCommons" id="Q9NX07"/>
<dbReference type="SignaLink" id="Q9NX07"/>
<dbReference type="BioGRID-ORCS" id="54952">
    <property type="hits" value="235 hits in 1169 CRISPR screens"/>
</dbReference>
<dbReference type="ChiTaRS" id="TRNAU1AP">
    <property type="organism name" value="human"/>
</dbReference>
<dbReference type="EvolutionaryTrace" id="Q9NX07"/>
<dbReference type="GenomeRNAi" id="54952"/>
<dbReference type="Pharos" id="Q9NX07">
    <property type="development level" value="Tbio"/>
</dbReference>
<dbReference type="PRO" id="PR:Q9NX07"/>
<dbReference type="Proteomes" id="UP000005640">
    <property type="component" value="Chromosome 1"/>
</dbReference>
<dbReference type="RNAct" id="Q9NX07">
    <property type="molecule type" value="protein"/>
</dbReference>
<dbReference type="Bgee" id="ENSG00000180098">
    <property type="expression patterns" value="Expressed in granulocyte and 167 other cell types or tissues"/>
</dbReference>
<dbReference type="GO" id="GO:0005737">
    <property type="term" value="C:cytoplasm"/>
    <property type="evidence" value="ECO:0007669"/>
    <property type="project" value="UniProtKB-SubCell"/>
</dbReference>
<dbReference type="GO" id="GO:0005634">
    <property type="term" value="C:nucleus"/>
    <property type="evidence" value="ECO:0000250"/>
    <property type="project" value="HGNC-UCL"/>
</dbReference>
<dbReference type="GO" id="GO:0003723">
    <property type="term" value="F:RNA binding"/>
    <property type="evidence" value="ECO:0007005"/>
    <property type="project" value="UniProtKB"/>
</dbReference>
<dbReference type="GO" id="GO:0000049">
    <property type="term" value="F:tRNA binding"/>
    <property type="evidence" value="ECO:0000318"/>
    <property type="project" value="GO_Central"/>
</dbReference>
<dbReference type="GO" id="GO:0001514">
    <property type="term" value="P:selenocysteine incorporation"/>
    <property type="evidence" value="ECO:0000250"/>
    <property type="project" value="HGNC-UCL"/>
</dbReference>
<dbReference type="CDD" id="cd12610">
    <property type="entry name" value="RRM1_SECp43"/>
    <property type="match status" value="1"/>
</dbReference>
<dbReference type="CDD" id="cd12612">
    <property type="entry name" value="RRM2_SECp43"/>
    <property type="match status" value="1"/>
</dbReference>
<dbReference type="FunFam" id="3.30.70.330:FF:000166">
    <property type="entry name" value="Trna selenocysteine 1-associated protein 1"/>
    <property type="match status" value="1"/>
</dbReference>
<dbReference type="FunFam" id="3.30.70.330:FF:000159">
    <property type="entry name" value="tRNA selenocysteine 1-associated protein 1"/>
    <property type="match status" value="1"/>
</dbReference>
<dbReference type="Gene3D" id="3.30.70.330">
    <property type="match status" value="2"/>
</dbReference>
<dbReference type="InterPro" id="IPR012677">
    <property type="entry name" value="Nucleotide-bd_a/b_plait_sf"/>
</dbReference>
<dbReference type="InterPro" id="IPR035979">
    <property type="entry name" value="RBD_domain_sf"/>
</dbReference>
<dbReference type="InterPro" id="IPR000504">
    <property type="entry name" value="RRM_dom"/>
</dbReference>
<dbReference type="InterPro" id="IPR034510">
    <property type="entry name" value="SECp43_RRM2"/>
</dbReference>
<dbReference type="InterPro" id="IPR040434">
    <property type="entry name" value="TSAP1"/>
</dbReference>
<dbReference type="InterPro" id="IPR041085">
    <property type="entry name" value="TSAP1_C"/>
</dbReference>
<dbReference type="PANTHER" id="PTHR37457:SF2">
    <property type="entry name" value="TRNA SELENOCYSTEINE 1-ASSOCIATED PROTEIN 1"/>
    <property type="match status" value="1"/>
</dbReference>
<dbReference type="PANTHER" id="PTHR37457">
    <property type="entry name" value="TRNA SELENOCYSTEINE 1-ASSOCIATED PROTEIN 1-RELATED"/>
    <property type="match status" value="1"/>
</dbReference>
<dbReference type="Pfam" id="PF00076">
    <property type="entry name" value="RRM_1"/>
    <property type="match status" value="2"/>
</dbReference>
<dbReference type="Pfam" id="PF17654">
    <property type="entry name" value="Trnau1ap"/>
    <property type="match status" value="1"/>
</dbReference>
<dbReference type="SMART" id="SM00360">
    <property type="entry name" value="RRM"/>
    <property type="match status" value="2"/>
</dbReference>
<dbReference type="SUPFAM" id="SSF54928">
    <property type="entry name" value="RNA-binding domain, RBD"/>
    <property type="match status" value="1"/>
</dbReference>
<dbReference type="PROSITE" id="PS50102">
    <property type="entry name" value="RRM"/>
    <property type="match status" value="2"/>
</dbReference>
<organism>
    <name type="scientific">Homo sapiens</name>
    <name type="common">Human</name>
    <dbReference type="NCBI Taxonomy" id="9606"/>
    <lineage>
        <taxon>Eukaryota</taxon>
        <taxon>Metazoa</taxon>
        <taxon>Chordata</taxon>
        <taxon>Craniata</taxon>
        <taxon>Vertebrata</taxon>
        <taxon>Euteleostomi</taxon>
        <taxon>Mammalia</taxon>
        <taxon>Eutheria</taxon>
        <taxon>Euarchontoglires</taxon>
        <taxon>Primates</taxon>
        <taxon>Haplorrhini</taxon>
        <taxon>Catarrhini</taxon>
        <taxon>Hominidae</taxon>
        <taxon>Homo</taxon>
    </lineage>
</organism>
<proteinExistence type="evidence at protein level"/>
<feature type="chain" id="PRO_0000304917" description="tRNA selenocysteine 1-associated protein 1">
    <location>
        <begin position="1"/>
        <end position="287"/>
    </location>
</feature>
<feature type="domain" description="RRM 1" evidence="2">
    <location>
        <begin position="3"/>
        <end position="86"/>
    </location>
</feature>
<feature type="domain" description="RRM 2" evidence="2">
    <location>
        <begin position="96"/>
        <end position="175"/>
    </location>
</feature>
<feature type="splice variant" id="VSP_028130" description="In isoform 2." evidence="4">
    <location>
        <begin position="1"/>
        <end position="110"/>
    </location>
</feature>
<feature type="strand" evidence="7">
    <location>
        <begin position="1"/>
        <end position="7"/>
    </location>
</feature>
<feature type="helix" evidence="7">
    <location>
        <begin position="16"/>
        <end position="25"/>
    </location>
</feature>
<feature type="strand" evidence="7">
    <location>
        <begin position="32"/>
        <end position="37"/>
    </location>
</feature>
<feature type="strand" evidence="7">
    <location>
        <begin position="39"/>
        <end position="41"/>
    </location>
</feature>
<feature type="strand" evidence="7">
    <location>
        <begin position="44"/>
        <end position="51"/>
    </location>
</feature>
<feature type="helix" evidence="7">
    <location>
        <begin position="55"/>
        <end position="63"/>
    </location>
</feature>
<feature type="turn" evidence="7">
    <location>
        <begin position="64"/>
        <end position="67"/>
    </location>
</feature>
<feature type="strand" evidence="7">
    <location>
        <begin position="68"/>
        <end position="72"/>
    </location>
</feature>
<feature type="strand" evidence="7">
    <location>
        <begin position="81"/>
        <end position="83"/>
    </location>
</feature>
<feature type="strand" evidence="6">
    <location>
        <begin position="98"/>
        <end position="101"/>
    </location>
</feature>
<feature type="helix" evidence="6">
    <location>
        <begin position="109"/>
        <end position="119"/>
    </location>
</feature>
<feature type="strand" evidence="6">
    <location>
        <begin position="123"/>
        <end position="130"/>
    </location>
</feature>
<feature type="strand" evidence="6">
    <location>
        <begin position="136"/>
        <end position="145"/>
    </location>
</feature>
<feature type="helix" evidence="6">
    <location>
        <begin position="147"/>
        <end position="156"/>
    </location>
</feature>
<feature type="turn" evidence="6">
    <location>
        <begin position="157"/>
        <end position="159"/>
    </location>
</feature>
<feature type="strand" evidence="6">
    <location>
        <begin position="162"/>
        <end position="166"/>
    </location>
</feature>